<feature type="chain" id="PRO_1000054520" description="Large ribosomal subunit protein uL15">
    <location>
        <begin position="1"/>
        <end position="143"/>
    </location>
</feature>
<feature type="region of interest" description="Disordered" evidence="2">
    <location>
        <begin position="1"/>
        <end position="58"/>
    </location>
</feature>
<feature type="compositionally biased region" description="Gly residues" evidence="2">
    <location>
        <begin position="21"/>
        <end position="31"/>
    </location>
</feature>
<organism>
    <name type="scientific">Ectopseudomonas mendocina (strain ymp)</name>
    <name type="common">Pseudomonas mendocina</name>
    <dbReference type="NCBI Taxonomy" id="399739"/>
    <lineage>
        <taxon>Bacteria</taxon>
        <taxon>Pseudomonadati</taxon>
        <taxon>Pseudomonadota</taxon>
        <taxon>Gammaproteobacteria</taxon>
        <taxon>Pseudomonadales</taxon>
        <taxon>Pseudomonadaceae</taxon>
        <taxon>Ectopseudomonas</taxon>
    </lineage>
</organism>
<dbReference type="EMBL" id="CP000680">
    <property type="protein sequence ID" value="ABP86637.1"/>
    <property type="molecule type" value="Genomic_DNA"/>
</dbReference>
<dbReference type="SMR" id="A4XZ71"/>
<dbReference type="STRING" id="399739.Pmen_3890"/>
<dbReference type="KEGG" id="pmy:Pmen_3890"/>
<dbReference type="PATRIC" id="fig|399739.8.peg.3943"/>
<dbReference type="eggNOG" id="COG0200">
    <property type="taxonomic scope" value="Bacteria"/>
</dbReference>
<dbReference type="HOGENOM" id="CLU_055188_4_2_6"/>
<dbReference type="OrthoDB" id="9810293at2"/>
<dbReference type="GO" id="GO:0022625">
    <property type="term" value="C:cytosolic large ribosomal subunit"/>
    <property type="evidence" value="ECO:0007669"/>
    <property type="project" value="TreeGrafter"/>
</dbReference>
<dbReference type="GO" id="GO:0019843">
    <property type="term" value="F:rRNA binding"/>
    <property type="evidence" value="ECO:0007669"/>
    <property type="project" value="UniProtKB-UniRule"/>
</dbReference>
<dbReference type="GO" id="GO:0003735">
    <property type="term" value="F:structural constituent of ribosome"/>
    <property type="evidence" value="ECO:0007669"/>
    <property type="project" value="InterPro"/>
</dbReference>
<dbReference type="GO" id="GO:0006412">
    <property type="term" value="P:translation"/>
    <property type="evidence" value="ECO:0007669"/>
    <property type="project" value="UniProtKB-UniRule"/>
</dbReference>
<dbReference type="Gene3D" id="3.100.10.10">
    <property type="match status" value="1"/>
</dbReference>
<dbReference type="HAMAP" id="MF_01341">
    <property type="entry name" value="Ribosomal_uL15"/>
    <property type="match status" value="1"/>
</dbReference>
<dbReference type="InterPro" id="IPR030878">
    <property type="entry name" value="Ribosomal_uL15"/>
</dbReference>
<dbReference type="InterPro" id="IPR021131">
    <property type="entry name" value="Ribosomal_uL15/eL18"/>
</dbReference>
<dbReference type="InterPro" id="IPR036227">
    <property type="entry name" value="Ribosomal_uL15/eL18_sf"/>
</dbReference>
<dbReference type="InterPro" id="IPR005749">
    <property type="entry name" value="Ribosomal_uL15_bac-type"/>
</dbReference>
<dbReference type="InterPro" id="IPR001196">
    <property type="entry name" value="Ribosomal_uL15_CS"/>
</dbReference>
<dbReference type="NCBIfam" id="TIGR01071">
    <property type="entry name" value="rplO_bact"/>
    <property type="match status" value="1"/>
</dbReference>
<dbReference type="PANTHER" id="PTHR12934">
    <property type="entry name" value="50S RIBOSOMAL PROTEIN L15"/>
    <property type="match status" value="1"/>
</dbReference>
<dbReference type="PANTHER" id="PTHR12934:SF11">
    <property type="entry name" value="LARGE RIBOSOMAL SUBUNIT PROTEIN UL15M"/>
    <property type="match status" value="1"/>
</dbReference>
<dbReference type="Pfam" id="PF00828">
    <property type="entry name" value="Ribosomal_L27A"/>
    <property type="match status" value="1"/>
</dbReference>
<dbReference type="SUPFAM" id="SSF52080">
    <property type="entry name" value="Ribosomal proteins L15p and L18e"/>
    <property type="match status" value="1"/>
</dbReference>
<dbReference type="PROSITE" id="PS00475">
    <property type="entry name" value="RIBOSOMAL_L15"/>
    <property type="match status" value="1"/>
</dbReference>
<evidence type="ECO:0000255" key="1">
    <source>
        <dbReference type="HAMAP-Rule" id="MF_01341"/>
    </source>
</evidence>
<evidence type="ECO:0000256" key="2">
    <source>
        <dbReference type="SAM" id="MobiDB-lite"/>
    </source>
</evidence>
<evidence type="ECO:0000305" key="3"/>
<sequence>MQLNDLRSAPGARREKHRPGRGIGSGLGKTGGRGHKGQTSRSGGSIAPGFEGGQQPLHRRLPKFGFVSLKAMDRAEVRTSELNKLEGVVTLQALKDANLVGQHVQRVKVMLSGEVTRAVTLKGIAATKGARAAIEAAGGKFED</sequence>
<protein>
    <recommendedName>
        <fullName evidence="1">Large ribosomal subunit protein uL15</fullName>
    </recommendedName>
    <alternativeName>
        <fullName evidence="3">50S ribosomal protein L15</fullName>
    </alternativeName>
</protein>
<accession>A4XZ71</accession>
<comment type="function">
    <text evidence="1">Binds to the 23S rRNA.</text>
</comment>
<comment type="subunit">
    <text evidence="1">Part of the 50S ribosomal subunit.</text>
</comment>
<comment type="similarity">
    <text evidence="1">Belongs to the universal ribosomal protein uL15 family.</text>
</comment>
<name>RL15_ECTM1</name>
<reference key="1">
    <citation type="submission" date="2007-04" db="EMBL/GenBank/DDBJ databases">
        <title>Complete sequence of Pseudomonas mendocina ymp.</title>
        <authorList>
            <consortium name="US DOE Joint Genome Institute"/>
            <person name="Copeland A."/>
            <person name="Lucas S."/>
            <person name="Lapidus A."/>
            <person name="Barry K."/>
            <person name="Glavina del Rio T."/>
            <person name="Dalin E."/>
            <person name="Tice H."/>
            <person name="Pitluck S."/>
            <person name="Kiss H."/>
            <person name="Brettin T."/>
            <person name="Detter J.C."/>
            <person name="Bruce D."/>
            <person name="Han C."/>
            <person name="Schmutz J."/>
            <person name="Larimer F."/>
            <person name="Land M."/>
            <person name="Hauser L."/>
            <person name="Kyrpides N."/>
            <person name="Mikhailova N."/>
            <person name="Hersman L."/>
            <person name="Dubois J."/>
            <person name="Maurice P."/>
            <person name="Richardson P."/>
        </authorList>
    </citation>
    <scope>NUCLEOTIDE SEQUENCE [LARGE SCALE GENOMIC DNA]</scope>
    <source>
        <strain>ymp</strain>
    </source>
</reference>
<gene>
    <name evidence="1" type="primary">rplO</name>
    <name type="ordered locus">Pmen_3890</name>
</gene>
<keyword id="KW-0687">Ribonucleoprotein</keyword>
<keyword id="KW-0689">Ribosomal protein</keyword>
<keyword id="KW-0694">RNA-binding</keyword>
<keyword id="KW-0699">rRNA-binding</keyword>
<proteinExistence type="inferred from homology"/>